<organism>
    <name type="scientific">Schizosaccharomyces pombe (strain 972 / ATCC 24843)</name>
    <name type="common">Fission yeast</name>
    <dbReference type="NCBI Taxonomy" id="284812"/>
    <lineage>
        <taxon>Eukaryota</taxon>
        <taxon>Fungi</taxon>
        <taxon>Dikarya</taxon>
        <taxon>Ascomycota</taxon>
        <taxon>Taphrinomycotina</taxon>
        <taxon>Schizosaccharomycetes</taxon>
        <taxon>Schizosaccharomycetales</taxon>
        <taxon>Schizosaccharomycetaceae</taxon>
        <taxon>Schizosaccharomyces</taxon>
    </lineage>
</organism>
<feature type="transit peptide" description="Mitochondrion" evidence="2">
    <location>
        <begin position="1"/>
        <end position="28"/>
    </location>
</feature>
<feature type="chain" id="PRO_0000116391" description="ATPase synthesis protein 25, mitochondrial">
    <location>
        <begin position="29"/>
        <end position="542"/>
    </location>
</feature>
<feature type="region of interest" description="Disordered" evidence="3">
    <location>
        <begin position="34"/>
        <end position="56"/>
    </location>
</feature>
<feature type="compositionally biased region" description="Polar residues" evidence="3">
    <location>
        <begin position="39"/>
        <end position="52"/>
    </location>
</feature>
<protein>
    <recommendedName>
        <fullName>ATPase synthesis protein 25, mitochondrial</fullName>
    </recommendedName>
</protein>
<gene>
    <name type="primary">atp25</name>
    <name type="ORF">SPAC31A2.06</name>
</gene>
<sequence>MPTYRFNYLRFNKLCVSFFRSKFDKRPFASQKFPENLVPDNSSNDANSQPEEVSSKKPWYVDEKHNLFPKKAHFDAVALPPIPKGAPNFLADVLNLLKKKYYATDLSFVNSPADSFWCDSDLILLASCNCGSEVVSATNGLLRLLKQKNVGPVNVDGLTSASRRKILERRMRKRSNLSNRQLNTSENNWTCLSIENFGISIHVITKNFREYYKLDNIEHVKDETLYSDLEHGKQSRVSLTSKSTPDNSLPPNFINNHSNVFRRSFHTCNFSLKSAASLYCDTQDILLNVNSQNLTSTLEKYKKMHLQNPNNFSLDFTLSIFERLRKDSSLQLTTKDINTLFSTIALSPTKLSMASKHSKNLVSERMLYLSLMYKSLVDLKTIDSFSLKLLFLKFMICSCMVKGESNFFLDNRIFLLERIMNRYGIPMTIDTFLLMQFILAKSNRWSEVWRRWDNLRKAGVVFNERLYNHVYLLAFESKNERVINYVLTNIFEDMVSQSPPIPASKLMATSLKKCVQSLPEKYAHSFPSVRNYIAKMENSMTH</sequence>
<name>ATP25_SCHPO</name>
<comment type="function">
    <text evidence="1">mRNA stabilization factor specific for the 0.95 kb oli1 mRNA. Also involved in oli1 ring formation (By similarity).</text>
</comment>
<comment type="subcellular location">
    <subcellularLocation>
        <location evidence="4">Mitochondrion inner membrane</location>
        <topology evidence="4">Peripheral membrane protein</topology>
        <orientation evidence="4">Matrix side</orientation>
    </subcellularLocation>
</comment>
<comment type="similarity">
    <text evidence="5">Belongs to the ATP25 family.</text>
</comment>
<keyword id="KW-0472">Membrane</keyword>
<keyword id="KW-0496">Mitochondrion</keyword>
<keyword id="KW-0999">Mitochondrion inner membrane</keyword>
<keyword id="KW-1185">Reference proteome</keyword>
<keyword id="KW-0809">Transit peptide</keyword>
<accession>Q09726</accession>
<evidence type="ECO:0000250" key="1"/>
<evidence type="ECO:0000255" key="2"/>
<evidence type="ECO:0000256" key="3">
    <source>
        <dbReference type="SAM" id="MobiDB-lite"/>
    </source>
</evidence>
<evidence type="ECO:0000269" key="4">
    <source>
    </source>
</evidence>
<evidence type="ECO:0000305" key="5"/>
<proteinExistence type="inferred from homology"/>
<dbReference type="EMBL" id="CU329670">
    <property type="protein sequence ID" value="CAA90464.1"/>
    <property type="molecule type" value="Genomic_DNA"/>
</dbReference>
<dbReference type="PIR" id="T38604">
    <property type="entry name" value="S58102"/>
</dbReference>
<dbReference type="RefSeq" id="NP_592918.1">
    <property type="nucleotide sequence ID" value="NM_001018319.2"/>
</dbReference>
<dbReference type="SMR" id="Q09726"/>
<dbReference type="FunCoup" id="Q09726">
    <property type="interactions" value="206"/>
</dbReference>
<dbReference type="STRING" id="284812.Q09726"/>
<dbReference type="PaxDb" id="4896-SPAC31A2.06.1"/>
<dbReference type="EnsemblFungi" id="SPAC31A2.06.1">
    <property type="protein sequence ID" value="SPAC31A2.06.1:pep"/>
    <property type="gene ID" value="SPAC31A2.06"/>
</dbReference>
<dbReference type="GeneID" id="2542929"/>
<dbReference type="KEGG" id="spo:2542929"/>
<dbReference type="PomBase" id="SPAC31A2.06">
    <property type="gene designation" value="atp25"/>
</dbReference>
<dbReference type="VEuPathDB" id="FungiDB:SPAC31A2.06"/>
<dbReference type="HOGENOM" id="CLU_502633_0_0_1"/>
<dbReference type="InParanoid" id="Q09726"/>
<dbReference type="OMA" id="YVEYAER"/>
<dbReference type="PRO" id="PR:Q09726"/>
<dbReference type="Proteomes" id="UP000002485">
    <property type="component" value="Chromosome I"/>
</dbReference>
<dbReference type="GO" id="GO:0099617">
    <property type="term" value="C:matrix side of mitochondrial inner membrane"/>
    <property type="evidence" value="ECO:0000305"/>
    <property type="project" value="PomBase"/>
</dbReference>
<dbReference type="GO" id="GO:0005739">
    <property type="term" value="C:mitochondrion"/>
    <property type="evidence" value="ECO:0007005"/>
    <property type="project" value="PomBase"/>
</dbReference>
<dbReference type="GO" id="GO:1990817">
    <property type="term" value="F:poly(A) RNA polymerase activity"/>
    <property type="evidence" value="ECO:0000255"/>
    <property type="project" value="PomBase"/>
</dbReference>
<dbReference type="GO" id="GO:0090615">
    <property type="term" value="P:mitochondrial mRNA processing"/>
    <property type="evidence" value="ECO:0000305"/>
    <property type="project" value="PomBase"/>
</dbReference>
<dbReference type="GO" id="GO:0048255">
    <property type="term" value="P:mRNA stabilization"/>
    <property type="evidence" value="ECO:0000318"/>
    <property type="project" value="GO_Central"/>
</dbReference>
<dbReference type="Gene3D" id="3.30.460.10">
    <property type="entry name" value="Beta Polymerase, domain 2"/>
    <property type="match status" value="1"/>
</dbReference>
<dbReference type="InterPro" id="IPR040152">
    <property type="entry name" value="Atp25"/>
</dbReference>
<dbReference type="InterPro" id="IPR043519">
    <property type="entry name" value="NT_sf"/>
</dbReference>
<dbReference type="PANTHER" id="PTHR28087">
    <property type="entry name" value="ATPASE SYNTHESIS PROTEIN 25, MITOCHONDRIAL"/>
    <property type="match status" value="1"/>
</dbReference>
<dbReference type="PANTHER" id="PTHR28087:SF1">
    <property type="entry name" value="ATPASE SYNTHESIS PROTEIN 25, MITOCHONDRIAL"/>
    <property type="match status" value="1"/>
</dbReference>
<dbReference type="Pfam" id="PF02410">
    <property type="entry name" value="RsfS"/>
    <property type="match status" value="1"/>
</dbReference>
<dbReference type="SUPFAM" id="SSF81301">
    <property type="entry name" value="Nucleotidyltransferase"/>
    <property type="match status" value="1"/>
</dbReference>
<reference key="1">
    <citation type="journal article" date="2002" name="Nature">
        <title>The genome sequence of Schizosaccharomyces pombe.</title>
        <authorList>
            <person name="Wood V."/>
            <person name="Gwilliam R."/>
            <person name="Rajandream M.A."/>
            <person name="Lyne M.H."/>
            <person name="Lyne R."/>
            <person name="Stewart A."/>
            <person name="Sgouros J.G."/>
            <person name="Peat N."/>
            <person name="Hayles J."/>
            <person name="Baker S.G."/>
            <person name="Basham D."/>
            <person name="Bowman S."/>
            <person name="Brooks K."/>
            <person name="Brown D."/>
            <person name="Brown S."/>
            <person name="Chillingworth T."/>
            <person name="Churcher C.M."/>
            <person name="Collins M."/>
            <person name="Connor R."/>
            <person name="Cronin A."/>
            <person name="Davis P."/>
            <person name="Feltwell T."/>
            <person name="Fraser A."/>
            <person name="Gentles S."/>
            <person name="Goble A."/>
            <person name="Hamlin N."/>
            <person name="Harris D.E."/>
            <person name="Hidalgo J."/>
            <person name="Hodgson G."/>
            <person name="Holroyd S."/>
            <person name="Hornsby T."/>
            <person name="Howarth S."/>
            <person name="Huckle E.J."/>
            <person name="Hunt S."/>
            <person name="Jagels K."/>
            <person name="James K.D."/>
            <person name="Jones L."/>
            <person name="Jones M."/>
            <person name="Leather S."/>
            <person name="McDonald S."/>
            <person name="McLean J."/>
            <person name="Mooney P."/>
            <person name="Moule S."/>
            <person name="Mungall K.L."/>
            <person name="Murphy L.D."/>
            <person name="Niblett D."/>
            <person name="Odell C."/>
            <person name="Oliver K."/>
            <person name="O'Neil S."/>
            <person name="Pearson D."/>
            <person name="Quail M.A."/>
            <person name="Rabbinowitsch E."/>
            <person name="Rutherford K.M."/>
            <person name="Rutter S."/>
            <person name="Saunders D."/>
            <person name="Seeger K."/>
            <person name="Sharp S."/>
            <person name="Skelton J."/>
            <person name="Simmonds M.N."/>
            <person name="Squares R."/>
            <person name="Squares S."/>
            <person name="Stevens K."/>
            <person name="Taylor K."/>
            <person name="Taylor R.G."/>
            <person name="Tivey A."/>
            <person name="Walsh S.V."/>
            <person name="Warren T."/>
            <person name="Whitehead S."/>
            <person name="Woodward J.R."/>
            <person name="Volckaert G."/>
            <person name="Aert R."/>
            <person name="Robben J."/>
            <person name="Grymonprez B."/>
            <person name="Weltjens I."/>
            <person name="Vanstreels E."/>
            <person name="Rieger M."/>
            <person name="Schaefer M."/>
            <person name="Mueller-Auer S."/>
            <person name="Gabel C."/>
            <person name="Fuchs M."/>
            <person name="Duesterhoeft A."/>
            <person name="Fritzc C."/>
            <person name="Holzer E."/>
            <person name="Moestl D."/>
            <person name="Hilbert H."/>
            <person name="Borzym K."/>
            <person name="Langer I."/>
            <person name="Beck A."/>
            <person name="Lehrach H."/>
            <person name="Reinhardt R."/>
            <person name="Pohl T.M."/>
            <person name="Eger P."/>
            <person name="Zimmermann W."/>
            <person name="Wedler H."/>
            <person name="Wambutt R."/>
            <person name="Purnelle B."/>
            <person name="Goffeau A."/>
            <person name="Cadieu E."/>
            <person name="Dreano S."/>
            <person name="Gloux S."/>
            <person name="Lelaure V."/>
            <person name="Mottier S."/>
            <person name="Galibert F."/>
            <person name="Aves S.J."/>
            <person name="Xiang Z."/>
            <person name="Hunt C."/>
            <person name="Moore K."/>
            <person name="Hurst S.M."/>
            <person name="Lucas M."/>
            <person name="Rochet M."/>
            <person name="Gaillardin C."/>
            <person name="Tallada V.A."/>
            <person name="Garzon A."/>
            <person name="Thode G."/>
            <person name="Daga R.R."/>
            <person name="Cruzado L."/>
            <person name="Jimenez J."/>
            <person name="Sanchez M."/>
            <person name="del Rey F."/>
            <person name="Benito J."/>
            <person name="Dominguez A."/>
            <person name="Revuelta J.L."/>
            <person name="Moreno S."/>
            <person name="Armstrong J."/>
            <person name="Forsburg S.L."/>
            <person name="Cerutti L."/>
            <person name="Lowe T."/>
            <person name="McCombie W.R."/>
            <person name="Paulsen I."/>
            <person name="Potashkin J."/>
            <person name="Shpakovski G.V."/>
            <person name="Ussery D."/>
            <person name="Barrell B.G."/>
            <person name="Nurse P."/>
        </authorList>
    </citation>
    <scope>NUCLEOTIDE SEQUENCE [LARGE SCALE GENOMIC DNA]</scope>
    <source>
        <strain>972 / ATCC 24843</strain>
    </source>
</reference>
<reference key="2">
    <citation type="journal article" date="2006" name="Nat. Biotechnol.">
        <title>ORFeome cloning and global analysis of protein localization in the fission yeast Schizosaccharomyces pombe.</title>
        <authorList>
            <person name="Matsuyama A."/>
            <person name="Arai R."/>
            <person name="Yashiroda Y."/>
            <person name="Shirai A."/>
            <person name="Kamata A."/>
            <person name="Sekido S."/>
            <person name="Kobayashi Y."/>
            <person name="Hashimoto A."/>
            <person name="Hamamoto M."/>
            <person name="Hiraoka Y."/>
            <person name="Horinouchi S."/>
            <person name="Yoshida M."/>
        </authorList>
    </citation>
    <scope>SUBCELLULAR LOCATION [LARGE SCALE ANALYSIS]</scope>
</reference>